<protein>
    <recommendedName>
        <fullName evidence="1">Photosystem II extrinsic protein V</fullName>
        <shortName evidence="1">PsbV</shortName>
    </recommendedName>
    <alternativeName>
        <fullName evidence="1">Cytochrome c-550</fullName>
    </alternativeName>
    <alternativeName>
        <fullName evidence="1">Cytochrome c550</fullName>
    </alternativeName>
    <alternativeName>
        <fullName evidence="1">Low-potential cytochrome c</fullName>
    </alternativeName>
</protein>
<name>CY550_MICAE</name>
<proteinExistence type="evidence at protein level"/>
<feature type="chain" id="PRO_0000108380" description="Photosystem II extrinsic protein V">
    <location>
        <begin position="1"/>
        <end position="135"/>
    </location>
</feature>
<feature type="binding site" description="covalent" evidence="1">
    <location>
        <position position="37"/>
    </location>
    <ligand>
        <name>heme c</name>
        <dbReference type="ChEBI" id="CHEBI:61717"/>
    </ligand>
</feature>
<feature type="binding site" description="covalent" evidence="1">
    <location>
        <position position="40"/>
    </location>
    <ligand>
        <name>heme c</name>
        <dbReference type="ChEBI" id="CHEBI:61717"/>
    </ligand>
</feature>
<feature type="binding site" description="axial binding residue" evidence="1">
    <location>
        <position position="41"/>
    </location>
    <ligand>
        <name>heme c</name>
        <dbReference type="ChEBI" id="CHEBI:61717"/>
    </ligand>
    <ligandPart>
        <name>Fe</name>
        <dbReference type="ChEBI" id="CHEBI:18248"/>
    </ligandPart>
</feature>
<feature type="binding site" description="axial binding residue" evidence="1">
    <location>
        <position position="92"/>
    </location>
    <ligand>
        <name>heme c</name>
        <dbReference type="ChEBI" id="CHEBI:61717"/>
    </ligand>
    <ligandPart>
        <name>Fe</name>
        <dbReference type="ChEBI" id="CHEBI:18248"/>
    </ligandPart>
</feature>
<organism>
    <name type="scientific">Microcystis aeruginosa</name>
    <dbReference type="NCBI Taxonomy" id="1126"/>
    <lineage>
        <taxon>Bacteria</taxon>
        <taxon>Bacillati</taxon>
        <taxon>Cyanobacteriota</taxon>
        <taxon>Cyanophyceae</taxon>
        <taxon>Oscillatoriophycideae</taxon>
        <taxon>Chroococcales</taxon>
        <taxon>Microcystaceae</taxon>
        <taxon>Microcystis</taxon>
    </lineage>
</organism>
<dbReference type="PIR" id="S03860">
    <property type="entry name" value="S03860"/>
</dbReference>
<dbReference type="SMR" id="P19129"/>
<dbReference type="GO" id="GO:0009523">
    <property type="term" value="C:photosystem II"/>
    <property type="evidence" value="ECO:0007669"/>
    <property type="project" value="UniProtKB-KW"/>
</dbReference>
<dbReference type="GO" id="GO:0031676">
    <property type="term" value="C:plasma membrane-derived thylakoid membrane"/>
    <property type="evidence" value="ECO:0007669"/>
    <property type="project" value="UniProtKB-SubCell"/>
</dbReference>
<dbReference type="GO" id="GO:0009055">
    <property type="term" value="F:electron transfer activity"/>
    <property type="evidence" value="ECO:0007669"/>
    <property type="project" value="InterPro"/>
</dbReference>
<dbReference type="GO" id="GO:0020037">
    <property type="term" value="F:heme binding"/>
    <property type="evidence" value="ECO:0007669"/>
    <property type="project" value="InterPro"/>
</dbReference>
<dbReference type="GO" id="GO:0005506">
    <property type="term" value="F:iron ion binding"/>
    <property type="evidence" value="ECO:0007669"/>
    <property type="project" value="InterPro"/>
</dbReference>
<dbReference type="GO" id="GO:0019684">
    <property type="term" value="P:photosynthesis, light reaction"/>
    <property type="evidence" value="ECO:0007669"/>
    <property type="project" value="UniProtKB-UniRule"/>
</dbReference>
<dbReference type="GO" id="GO:0022904">
    <property type="term" value="P:respiratory electron transport chain"/>
    <property type="evidence" value="ECO:0007669"/>
    <property type="project" value="InterPro"/>
</dbReference>
<dbReference type="Gene3D" id="1.10.760.10">
    <property type="entry name" value="Cytochrome c-like domain"/>
    <property type="match status" value="1"/>
</dbReference>
<dbReference type="HAMAP" id="MF_01378">
    <property type="entry name" value="PSII_Cyt550"/>
    <property type="match status" value="1"/>
</dbReference>
<dbReference type="InterPro" id="IPR009056">
    <property type="entry name" value="Cyt_c-like_dom"/>
</dbReference>
<dbReference type="InterPro" id="IPR036909">
    <property type="entry name" value="Cyt_c-like_dom_sf"/>
</dbReference>
<dbReference type="InterPro" id="IPR029490">
    <property type="entry name" value="Cytochrom_C550"/>
</dbReference>
<dbReference type="InterPro" id="IPR017851">
    <property type="entry name" value="PsbV_cyt_c550"/>
</dbReference>
<dbReference type="InterPro" id="IPR016003">
    <property type="entry name" value="PsbV_cyt_c550-like"/>
</dbReference>
<dbReference type="NCBIfam" id="TIGR03045">
    <property type="entry name" value="PS_II_C550"/>
    <property type="match status" value="1"/>
</dbReference>
<dbReference type="Pfam" id="PF14495">
    <property type="entry name" value="Cytochrom_C550"/>
    <property type="match status" value="1"/>
</dbReference>
<dbReference type="PIRSF" id="PIRSF005890">
    <property type="entry name" value="Phot_II_cyt_c550"/>
    <property type="match status" value="1"/>
</dbReference>
<dbReference type="SUPFAM" id="SSF46626">
    <property type="entry name" value="Cytochrome c"/>
    <property type="match status" value="1"/>
</dbReference>
<dbReference type="PROSITE" id="PS51007">
    <property type="entry name" value="CYTC"/>
    <property type="match status" value="1"/>
</dbReference>
<comment type="function">
    <text>One of the extrinsic, lumenal subunits of photosystem II (PSII). PSII is a light-driven water plastoquinone oxidoreductase, using light energy to abstract electrons from H(2)O, generating a proton gradient subsequently used for ATP formation. The extrinsic proteins stabilize the structure of photosystem II oxygen-evolving complex (OEC), the ion environment of oxygen evolution and protect the OEC against heat-induced inactivation. Low-potential cytochrome c that plays a role in the OEC of PSII.</text>
</comment>
<comment type="cofactor">
    <cofactor>
        <name>heme c</name>
        <dbReference type="ChEBI" id="CHEBI:61717"/>
    </cofactor>
    <text>Binds 1 heme c group covalently per subunit.</text>
</comment>
<comment type="subunit">
    <text evidence="1">PSII is composed of 1 copy each of membrane proteins PsbA, PsbB, PsbC, PsbD, PsbE, PsbF, PsbH, PsbI, PsbJ, PsbK, PsbL, PsbM, PsbT, PsbX, PsbY, PsbZ, Psb30/Ycf12, peripheral proteins PsbO, CyanoQ (PsbQ), PsbU, PsbV and a large number of cofactors. It forms dimeric complexes.</text>
</comment>
<comment type="subcellular location">
    <subcellularLocation>
        <location evidence="1">Cellular thylakoid membrane</location>
        <topology evidence="1">Peripheral membrane protein</topology>
        <orientation evidence="1">Lumenal side</orientation>
    </subcellularLocation>
    <text evidence="1">Associated with photosystem II at the lumenal side of the thylakoid membrane.</text>
</comment>
<comment type="similarity">
    <text evidence="1">Belongs to the cytochrome c family. PsbV subfamily.</text>
</comment>
<sequence length="135" mass="15040">LELDEKTLTITLNDAGESVTLTSEQATEGQKLFVANCTKCHLQGKTKTNNNVSLGLGDLAKAEPPRDNLLALIDYLEHPTSYDGEDDLSELHPNVSRPDIYPELRNLTEDDVYNVAAYMLVAPRLDERWGGTIYF</sequence>
<evidence type="ECO:0000255" key="1">
    <source>
        <dbReference type="HAMAP-Rule" id="MF_01378"/>
    </source>
</evidence>
<keyword id="KW-0903">Direct protein sequencing</keyword>
<keyword id="KW-0249">Electron transport</keyword>
<keyword id="KW-0349">Heme</keyword>
<keyword id="KW-0408">Iron</keyword>
<keyword id="KW-0472">Membrane</keyword>
<keyword id="KW-0479">Metal-binding</keyword>
<keyword id="KW-0602">Photosynthesis</keyword>
<keyword id="KW-0604">Photosystem II</keyword>
<keyword id="KW-0793">Thylakoid</keyword>
<keyword id="KW-0813">Transport</keyword>
<accession>P19129</accession>
<reference key="1">
    <citation type="journal article" date="1989" name="Arch. Biochem. Biophys.">
        <title>The amino acid sequence of low-potential cytochrome c550 from the cyanobacterium Microcystis aeruginosa.</title>
        <authorList>
            <person name="Cohn C.L."/>
            <person name="Sprinkle J.R."/>
            <person name="Alam J."/>
            <person name="Hermodson M."/>
            <person name="Meyer T."/>
            <person name="Krogmann D.W."/>
        </authorList>
    </citation>
    <scope>PROTEIN SEQUENCE</scope>
</reference>
<gene>
    <name evidence="1" type="primary">psbV</name>
</gene>